<accession>Q50LE0</accession>
<gene>
    <name evidence="4" type="primary">CYP85A3</name>
</gene>
<organism>
    <name type="scientific">Solanum lycopersicum</name>
    <name type="common">Tomato</name>
    <name type="synonym">Lycopersicon esculentum</name>
    <dbReference type="NCBI Taxonomy" id="4081"/>
    <lineage>
        <taxon>Eukaryota</taxon>
        <taxon>Viridiplantae</taxon>
        <taxon>Streptophyta</taxon>
        <taxon>Embryophyta</taxon>
        <taxon>Tracheophyta</taxon>
        <taxon>Spermatophyta</taxon>
        <taxon>Magnoliopsida</taxon>
        <taxon>eudicotyledons</taxon>
        <taxon>Gunneridae</taxon>
        <taxon>Pentapetalae</taxon>
        <taxon>asterids</taxon>
        <taxon>lamiids</taxon>
        <taxon>Solanales</taxon>
        <taxon>Solanaceae</taxon>
        <taxon>Solanoideae</taxon>
        <taxon>Solaneae</taxon>
        <taxon>Solanum</taxon>
        <taxon>Solanum subgen. Lycopersicon</taxon>
    </lineage>
</organism>
<dbReference type="EC" id="1.14.14.180" evidence="3"/>
<dbReference type="EC" id="1.14.14.179" evidence="3"/>
<dbReference type="EMBL" id="AB190445">
    <property type="protein sequence ID" value="BAD98244.1"/>
    <property type="molecule type" value="mRNA"/>
</dbReference>
<dbReference type="RefSeq" id="NP_001234520.1">
    <property type="nucleotide sequence ID" value="NM_001247591.1"/>
</dbReference>
<dbReference type="SMR" id="Q50LE0"/>
<dbReference type="FunCoup" id="Q50LE0">
    <property type="interactions" value="145"/>
</dbReference>
<dbReference type="STRING" id="4081.Q50LE0"/>
<dbReference type="PaxDb" id="4081-Solyc02g065750.1.1"/>
<dbReference type="EnsemblPlants" id="Solyc02g065750.2.1">
    <property type="protein sequence ID" value="Solyc02g065750.2.1"/>
    <property type="gene ID" value="Solyc02g065750.2"/>
</dbReference>
<dbReference type="GeneID" id="100136888"/>
<dbReference type="Gramene" id="Solyc02g065750.2.1">
    <property type="protein sequence ID" value="Solyc02g065750.2.1"/>
    <property type="gene ID" value="Solyc02g065750.2"/>
</dbReference>
<dbReference type="KEGG" id="sly:100136888"/>
<dbReference type="eggNOG" id="KOG0157">
    <property type="taxonomic scope" value="Eukaryota"/>
</dbReference>
<dbReference type="HOGENOM" id="CLU_001570_15_5_1"/>
<dbReference type="InParanoid" id="Q50LE0"/>
<dbReference type="OMA" id="MELNGYM"/>
<dbReference type="OrthoDB" id="1372046at2759"/>
<dbReference type="PhylomeDB" id="Q50LE0"/>
<dbReference type="BioCyc" id="MetaCyc:MONOMER-9503"/>
<dbReference type="UniPathway" id="UPA00381"/>
<dbReference type="Proteomes" id="UP000004994">
    <property type="component" value="Chromosome 2"/>
</dbReference>
<dbReference type="GO" id="GO:0016020">
    <property type="term" value="C:membrane"/>
    <property type="evidence" value="ECO:0007669"/>
    <property type="project" value="UniProtKB-SubCell"/>
</dbReference>
<dbReference type="GO" id="GO:0102734">
    <property type="term" value="F:brassinolide synthase activity"/>
    <property type="evidence" value="ECO:0007669"/>
    <property type="project" value="RHEA"/>
</dbReference>
<dbReference type="GO" id="GO:0020037">
    <property type="term" value="F:heme binding"/>
    <property type="evidence" value="ECO:0007669"/>
    <property type="project" value="InterPro"/>
</dbReference>
<dbReference type="GO" id="GO:0005506">
    <property type="term" value="F:iron ion binding"/>
    <property type="evidence" value="ECO:0007669"/>
    <property type="project" value="InterPro"/>
</dbReference>
<dbReference type="GO" id="GO:0004497">
    <property type="term" value="F:monooxygenase activity"/>
    <property type="evidence" value="ECO:0000318"/>
    <property type="project" value="GO_Central"/>
</dbReference>
<dbReference type="GO" id="GO:0016132">
    <property type="term" value="P:brassinosteroid biosynthetic process"/>
    <property type="evidence" value="ECO:0000318"/>
    <property type="project" value="GO_Central"/>
</dbReference>
<dbReference type="GO" id="GO:0010268">
    <property type="term" value="P:brassinosteroid homeostasis"/>
    <property type="evidence" value="ECO:0000318"/>
    <property type="project" value="GO_Central"/>
</dbReference>
<dbReference type="CDD" id="cd11043">
    <property type="entry name" value="CYP90-like"/>
    <property type="match status" value="1"/>
</dbReference>
<dbReference type="FunFam" id="1.10.630.10:FF:000045">
    <property type="entry name" value="Cytochrome P450 85A1"/>
    <property type="match status" value="1"/>
</dbReference>
<dbReference type="Gene3D" id="1.10.630.10">
    <property type="entry name" value="Cytochrome P450"/>
    <property type="match status" value="1"/>
</dbReference>
<dbReference type="InterPro" id="IPR001128">
    <property type="entry name" value="Cyt_P450"/>
</dbReference>
<dbReference type="InterPro" id="IPR017972">
    <property type="entry name" value="Cyt_P450_CS"/>
</dbReference>
<dbReference type="InterPro" id="IPR002401">
    <property type="entry name" value="Cyt_P450_E_grp-I"/>
</dbReference>
<dbReference type="InterPro" id="IPR036396">
    <property type="entry name" value="Cyt_P450_sf"/>
</dbReference>
<dbReference type="PANTHER" id="PTHR24286">
    <property type="entry name" value="CYTOCHROME P450 26"/>
    <property type="match status" value="1"/>
</dbReference>
<dbReference type="PANTHER" id="PTHR24286:SF169">
    <property type="entry name" value="CYTOCHROME P450 85A1"/>
    <property type="match status" value="1"/>
</dbReference>
<dbReference type="Pfam" id="PF00067">
    <property type="entry name" value="p450"/>
    <property type="match status" value="1"/>
</dbReference>
<dbReference type="PRINTS" id="PR00463">
    <property type="entry name" value="EP450I"/>
</dbReference>
<dbReference type="PRINTS" id="PR00385">
    <property type="entry name" value="P450"/>
</dbReference>
<dbReference type="SUPFAM" id="SSF48264">
    <property type="entry name" value="Cytochrome P450"/>
    <property type="match status" value="1"/>
</dbReference>
<dbReference type="PROSITE" id="PS00086">
    <property type="entry name" value="CYTOCHROME_P450"/>
    <property type="match status" value="1"/>
</dbReference>
<evidence type="ECO:0000250" key="1">
    <source>
        <dbReference type="UniProtKB" id="P04798"/>
    </source>
</evidence>
<evidence type="ECO:0000255" key="2"/>
<evidence type="ECO:0000269" key="3">
    <source>
    </source>
</evidence>
<evidence type="ECO:0000303" key="4">
    <source>
    </source>
</evidence>
<evidence type="ECO:0000305" key="5"/>
<name>C85A3_SOLLC</name>
<protein>
    <recommendedName>
        <fullName evidence="4">Cytochrome P450 85A3</fullName>
        <shortName evidence="4">LeCYP85A3</shortName>
    </recommendedName>
    <alternativeName>
        <fullName evidence="4">Brassinolide synthase CYP85A3</fullName>
        <ecNumber evidence="3">1.14.14.180</ecNumber>
    </alternativeName>
    <alternativeName>
        <fullName>C6-oxidase</fullName>
    </alternativeName>
    <alternativeName>
        <fullName evidence="4">Castasterone synthase CYP85A3</fullName>
        <ecNumber evidence="3">1.14.14.179</ecNumber>
    </alternativeName>
</protein>
<comment type="function">
    <text evidence="3">Catalyzes the C6-oxidation step in brassinosteroids biosynthesis (PubMed:15710611). Converts 6-deoxocastasterone (6-deoxoCS) to castasterone (CS), and castasterone (CS) to brassinolide (BL) (PubMed:15710611).</text>
</comment>
<comment type="catalytic activity">
    <reaction evidence="3">
        <text>6-deoxocastasterone + reduced [NADPH--hemoprotein reductase] + O2 = 6alpha-hydroxycastasterone + oxidized [NADPH--hemoprotein reductase] + H2O + H(+)</text>
        <dbReference type="Rhea" id="RHEA:69875"/>
        <dbReference type="Rhea" id="RHEA-COMP:11964"/>
        <dbReference type="Rhea" id="RHEA-COMP:11965"/>
        <dbReference type="ChEBI" id="CHEBI:15377"/>
        <dbReference type="ChEBI" id="CHEBI:15378"/>
        <dbReference type="ChEBI" id="CHEBI:15379"/>
        <dbReference type="ChEBI" id="CHEBI:20712"/>
        <dbReference type="ChEBI" id="CHEBI:20760"/>
        <dbReference type="ChEBI" id="CHEBI:57618"/>
        <dbReference type="ChEBI" id="CHEBI:58210"/>
    </reaction>
    <physiologicalReaction direction="left-to-right" evidence="3">
        <dbReference type="Rhea" id="RHEA:69876"/>
    </physiologicalReaction>
</comment>
<comment type="catalytic activity">
    <reaction evidence="3">
        <text>6alpha-hydroxycastasterone + reduced [NADPH--hemoprotein reductase] + O2 = castasterone + oxidized [NADPH--hemoprotein reductase] + 2 H2O + H(+)</text>
        <dbReference type="Rhea" id="RHEA:69879"/>
        <dbReference type="Rhea" id="RHEA-COMP:11964"/>
        <dbReference type="Rhea" id="RHEA-COMP:11965"/>
        <dbReference type="ChEBI" id="CHEBI:15377"/>
        <dbReference type="ChEBI" id="CHEBI:15378"/>
        <dbReference type="ChEBI" id="CHEBI:15379"/>
        <dbReference type="ChEBI" id="CHEBI:20760"/>
        <dbReference type="ChEBI" id="CHEBI:23051"/>
        <dbReference type="ChEBI" id="CHEBI:57618"/>
        <dbReference type="ChEBI" id="CHEBI:58210"/>
    </reaction>
    <physiologicalReaction direction="left-to-right" evidence="3">
        <dbReference type="Rhea" id="RHEA:69880"/>
    </physiologicalReaction>
</comment>
<comment type="catalytic activity">
    <reaction evidence="3">
        <text>castasterone + reduced [NADPH--hemoprotein reductase] + O2 = brassinolide + oxidized [NADPH--hemoprotein reductase] + H2O + H(+)</text>
        <dbReference type="Rhea" id="RHEA:69923"/>
        <dbReference type="Rhea" id="RHEA-COMP:11964"/>
        <dbReference type="Rhea" id="RHEA-COMP:11965"/>
        <dbReference type="ChEBI" id="CHEBI:15377"/>
        <dbReference type="ChEBI" id="CHEBI:15378"/>
        <dbReference type="ChEBI" id="CHEBI:15379"/>
        <dbReference type="ChEBI" id="CHEBI:23051"/>
        <dbReference type="ChEBI" id="CHEBI:28277"/>
        <dbReference type="ChEBI" id="CHEBI:57618"/>
        <dbReference type="ChEBI" id="CHEBI:58210"/>
        <dbReference type="EC" id="1.14.14.180"/>
    </reaction>
</comment>
<comment type="catalytic activity">
    <reaction evidence="3">
        <text>6-deoxocastasterone + 2 reduced [NADPH--hemoprotein reductase] + 2 O2 = castasterone + 2 oxidized [NADPH--hemoprotein reductase] + 3 H2O + 2 H(+)</text>
        <dbReference type="Rhea" id="RHEA:70031"/>
        <dbReference type="Rhea" id="RHEA-COMP:11964"/>
        <dbReference type="Rhea" id="RHEA-COMP:11965"/>
        <dbReference type="ChEBI" id="CHEBI:15377"/>
        <dbReference type="ChEBI" id="CHEBI:15378"/>
        <dbReference type="ChEBI" id="CHEBI:15379"/>
        <dbReference type="ChEBI" id="CHEBI:20712"/>
        <dbReference type="ChEBI" id="CHEBI:23051"/>
        <dbReference type="ChEBI" id="CHEBI:57618"/>
        <dbReference type="ChEBI" id="CHEBI:58210"/>
        <dbReference type="EC" id="1.14.14.179"/>
    </reaction>
    <physiologicalReaction direction="left-to-right" evidence="3">
        <dbReference type="Rhea" id="RHEA:70032"/>
    </physiologicalReaction>
</comment>
<comment type="cofactor">
    <cofactor evidence="1">
        <name>heme</name>
        <dbReference type="ChEBI" id="CHEBI:30413"/>
    </cofactor>
</comment>
<comment type="pathway">
    <text evidence="3">Plant hormone biosynthesis; brassinosteroid biosynthesis.</text>
</comment>
<comment type="subcellular location">
    <subcellularLocation>
        <location evidence="2">Membrane</location>
        <topology evidence="2">Single-pass membrane protein</topology>
    </subcellularLocation>
</comment>
<comment type="tissue specificity">
    <text evidence="3">Expressed in fruits.</text>
</comment>
<comment type="similarity">
    <text evidence="5">Belongs to the cytochrome P450 family.</text>
</comment>
<keyword id="KW-0349">Heme</keyword>
<keyword id="KW-0408">Iron</keyword>
<keyword id="KW-0472">Membrane</keyword>
<keyword id="KW-0479">Metal-binding</keyword>
<keyword id="KW-0503">Monooxygenase</keyword>
<keyword id="KW-0560">Oxidoreductase</keyword>
<keyword id="KW-1185">Reference proteome</keyword>
<keyword id="KW-0812">Transmembrane</keyword>
<keyword id="KW-1133">Transmembrane helix</keyword>
<proteinExistence type="evidence at protein level"/>
<feature type="chain" id="PRO_0000052174" description="Cytochrome P450 85A3">
    <location>
        <begin position="1"/>
        <end position="467"/>
    </location>
</feature>
<feature type="transmembrane region" description="Helical" evidence="2">
    <location>
        <begin position="2"/>
        <end position="22"/>
    </location>
</feature>
<feature type="binding site" description="axial binding residue" evidence="1">
    <location>
        <position position="417"/>
    </location>
    <ligand>
        <name>heme</name>
        <dbReference type="ChEBI" id="CHEBI:30413"/>
    </ligand>
    <ligandPart>
        <name>Fe</name>
        <dbReference type="ChEBI" id="CHEBI:18248"/>
    </ligandPart>
</feature>
<reference key="1">
    <citation type="journal article" date="2005" name="J. Biol. Chem.">
        <title>The last reaction producing brassinolide is catalyzed by cytochrome P-450s, CYP85A3 in tomato and CYP85A2 in Arabidopsis.</title>
        <authorList>
            <person name="Nomura T."/>
            <person name="Kushiro T."/>
            <person name="Yokota T."/>
            <person name="Kamiya Y."/>
            <person name="Bishop G.J."/>
            <person name="Yamaguchi S."/>
        </authorList>
    </citation>
    <scope>NUCLEOTIDE SEQUENCE [MRNA]</scope>
    <scope>FUNCTION</scope>
    <scope>TISSUE SPECIFICITY</scope>
    <scope>CATALYTIC ACTIVITY</scope>
    <scope>PATHWAY</scope>
</reference>
<sequence length="467" mass="53795">MAIFLIIFVVFFGFCILSTPLFRWIDIVYNKKNLPPGTMGWPIFGETREFLNQGPNFMKNQRARYGNFFKSHILGCPTVVSMDAGLNVYILNNEAKGLIPGYPQSMLDILGKCNIAAVHGATHKYIRGALLSLINPTMIKDHILPKIDKFMRSHLSGWDNCNVIDIQQMTKEMAFFSSLDQIGGFATSSSIAQEFRAGFLNIALGTISLPINFPTTNYYRGLQGRKTIVKLLRKIIEDRRGSKKIQQDMLGLMMNEEAKNRYTLSDEELIDQIITIMYSGFETVSTTSMMAVKYLHDHPKALEEIRKEHFAIREKKSLEDPIDYNDFKAMRFTRAVIYETLRLATIVNGVLRKTTQDMELNGYMIPKGWRIYVYTRELNYDPLIYPDPYTFNPWRWLENNLDHQSSFLMFGGGTRLCPGKELGVAEISTFLHYFVTRYRWEEVGGNKLMKFPRVEALNGLWIKVSAY</sequence>